<accession>A8Z242</accession>
<reference key="1">
    <citation type="journal article" date="2007" name="BMC Microbiol.">
        <title>Subtle genetic changes enhance virulence of methicillin resistant and sensitive Staphylococcus aureus.</title>
        <authorList>
            <person name="Highlander S.K."/>
            <person name="Hulten K.G."/>
            <person name="Qin X."/>
            <person name="Jiang H."/>
            <person name="Yerrapragada S."/>
            <person name="Mason E.O. Jr."/>
            <person name="Shang Y."/>
            <person name="Williams T.M."/>
            <person name="Fortunov R.M."/>
            <person name="Liu Y."/>
            <person name="Igboeli O."/>
            <person name="Petrosino J."/>
            <person name="Tirumalai M."/>
            <person name="Uzman A."/>
            <person name="Fox G.E."/>
            <person name="Cardenas A.M."/>
            <person name="Muzny D.M."/>
            <person name="Hemphill L."/>
            <person name="Ding Y."/>
            <person name="Dugan S."/>
            <person name="Blyth P.R."/>
            <person name="Buhay C.J."/>
            <person name="Dinh H.H."/>
            <person name="Hawes A.C."/>
            <person name="Holder M."/>
            <person name="Kovar C.L."/>
            <person name="Lee S.L."/>
            <person name="Liu W."/>
            <person name="Nazareth L.V."/>
            <person name="Wang Q."/>
            <person name="Zhou J."/>
            <person name="Kaplan S.L."/>
            <person name="Weinstock G.M."/>
        </authorList>
    </citation>
    <scope>NUCLEOTIDE SEQUENCE [LARGE SCALE GENOMIC DNA]</scope>
    <source>
        <strain>USA300 / TCH1516</strain>
    </source>
</reference>
<dbReference type="EC" id="4.1.1.48" evidence="1"/>
<dbReference type="EMBL" id="CP000730">
    <property type="protein sequence ID" value="ABX29317.1"/>
    <property type="molecule type" value="Genomic_DNA"/>
</dbReference>
<dbReference type="RefSeq" id="WP_000154116.1">
    <property type="nucleotide sequence ID" value="NC_010079.1"/>
</dbReference>
<dbReference type="SMR" id="A8Z242"/>
<dbReference type="KEGG" id="sax:USA300HOU_1305"/>
<dbReference type="HOGENOM" id="CLU_034247_2_1_9"/>
<dbReference type="UniPathway" id="UPA00035">
    <property type="reaction ID" value="UER00043"/>
</dbReference>
<dbReference type="GO" id="GO:0004425">
    <property type="term" value="F:indole-3-glycerol-phosphate synthase activity"/>
    <property type="evidence" value="ECO:0007669"/>
    <property type="project" value="UniProtKB-UniRule"/>
</dbReference>
<dbReference type="GO" id="GO:0004640">
    <property type="term" value="F:phosphoribosylanthranilate isomerase activity"/>
    <property type="evidence" value="ECO:0007669"/>
    <property type="project" value="TreeGrafter"/>
</dbReference>
<dbReference type="GO" id="GO:0000162">
    <property type="term" value="P:L-tryptophan biosynthetic process"/>
    <property type="evidence" value="ECO:0007669"/>
    <property type="project" value="UniProtKB-UniRule"/>
</dbReference>
<dbReference type="CDD" id="cd00331">
    <property type="entry name" value="IGPS"/>
    <property type="match status" value="1"/>
</dbReference>
<dbReference type="FunFam" id="3.20.20.70:FF:000212">
    <property type="entry name" value="Indole-3-glycerol phosphate synthase"/>
    <property type="match status" value="1"/>
</dbReference>
<dbReference type="Gene3D" id="3.20.20.70">
    <property type="entry name" value="Aldolase class I"/>
    <property type="match status" value="1"/>
</dbReference>
<dbReference type="HAMAP" id="MF_00134_B">
    <property type="entry name" value="IGPS_B"/>
    <property type="match status" value="1"/>
</dbReference>
<dbReference type="InterPro" id="IPR013785">
    <property type="entry name" value="Aldolase_TIM"/>
</dbReference>
<dbReference type="InterPro" id="IPR045186">
    <property type="entry name" value="Indole-3-glycerol_P_synth"/>
</dbReference>
<dbReference type="InterPro" id="IPR013798">
    <property type="entry name" value="Indole-3-glycerol_P_synth_dom"/>
</dbReference>
<dbReference type="InterPro" id="IPR001468">
    <property type="entry name" value="Indole-3-GlycerolPSynthase_CS"/>
</dbReference>
<dbReference type="InterPro" id="IPR011060">
    <property type="entry name" value="RibuloseP-bd_barrel"/>
</dbReference>
<dbReference type="NCBIfam" id="NF001371">
    <property type="entry name" value="PRK00278.1-3"/>
    <property type="match status" value="1"/>
</dbReference>
<dbReference type="PANTHER" id="PTHR22854:SF2">
    <property type="entry name" value="INDOLE-3-GLYCEROL-PHOSPHATE SYNTHASE"/>
    <property type="match status" value="1"/>
</dbReference>
<dbReference type="PANTHER" id="PTHR22854">
    <property type="entry name" value="TRYPTOPHAN BIOSYNTHESIS PROTEIN"/>
    <property type="match status" value="1"/>
</dbReference>
<dbReference type="Pfam" id="PF00218">
    <property type="entry name" value="IGPS"/>
    <property type="match status" value="1"/>
</dbReference>
<dbReference type="SUPFAM" id="SSF51366">
    <property type="entry name" value="Ribulose-phoshate binding barrel"/>
    <property type="match status" value="1"/>
</dbReference>
<dbReference type="PROSITE" id="PS00614">
    <property type="entry name" value="IGPS"/>
    <property type="match status" value="1"/>
</dbReference>
<organism>
    <name type="scientific">Staphylococcus aureus (strain USA300 / TCH1516)</name>
    <dbReference type="NCBI Taxonomy" id="451516"/>
    <lineage>
        <taxon>Bacteria</taxon>
        <taxon>Bacillati</taxon>
        <taxon>Bacillota</taxon>
        <taxon>Bacilli</taxon>
        <taxon>Bacillales</taxon>
        <taxon>Staphylococcaceae</taxon>
        <taxon>Staphylococcus</taxon>
    </lineage>
</organism>
<keyword id="KW-0028">Amino-acid biosynthesis</keyword>
<keyword id="KW-0057">Aromatic amino acid biosynthesis</keyword>
<keyword id="KW-0210">Decarboxylase</keyword>
<keyword id="KW-0456">Lyase</keyword>
<keyword id="KW-0822">Tryptophan biosynthesis</keyword>
<gene>
    <name evidence="1" type="primary">trpC</name>
    <name type="ordered locus">USA300HOU_1305</name>
</gene>
<sequence length="260" mass="29527">MTILSEIVKYKQSLLQNGYYQDKLNTLKSVKIQNKKSFINAIEKEPKLAIIAEIKSKSPTVNDLPERDLSQQISDYDQYGANAVSILTDEKYFGGSFERLQALTTKTTLPVLCKDFIIDPLQIDVAKQAGASMILLIVNILSDKQLKDLYNYAISQNLEVLVEVHDRHELERAYKVNAKLIGVNNRDLKRFVTNVEHTNTILENKKTNHYYISESGIHDASDVRKILHSGIDGLLIGEALMRCDNLSEFLPQLKMQKVKS</sequence>
<comment type="catalytic activity">
    <reaction evidence="1">
        <text>1-(2-carboxyphenylamino)-1-deoxy-D-ribulose 5-phosphate + H(+) = (1S,2R)-1-C-(indol-3-yl)glycerol 3-phosphate + CO2 + H2O</text>
        <dbReference type="Rhea" id="RHEA:23476"/>
        <dbReference type="ChEBI" id="CHEBI:15377"/>
        <dbReference type="ChEBI" id="CHEBI:15378"/>
        <dbReference type="ChEBI" id="CHEBI:16526"/>
        <dbReference type="ChEBI" id="CHEBI:58613"/>
        <dbReference type="ChEBI" id="CHEBI:58866"/>
        <dbReference type="EC" id="4.1.1.48"/>
    </reaction>
</comment>
<comment type="pathway">
    <text evidence="1">Amino-acid biosynthesis; L-tryptophan biosynthesis; L-tryptophan from chorismate: step 4/5.</text>
</comment>
<comment type="similarity">
    <text evidence="1">Belongs to the TrpC family.</text>
</comment>
<proteinExistence type="inferred from homology"/>
<evidence type="ECO:0000255" key="1">
    <source>
        <dbReference type="HAMAP-Rule" id="MF_00134"/>
    </source>
</evidence>
<feature type="chain" id="PRO_1000095893" description="Indole-3-glycerol phosphate synthase">
    <location>
        <begin position="1"/>
        <end position="260"/>
    </location>
</feature>
<name>TRPC_STAAT</name>
<protein>
    <recommendedName>
        <fullName evidence="1">Indole-3-glycerol phosphate synthase</fullName>
        <shortName evidence="1">IGPS</shortName>
        <ecNumber evidence="1">4.1.1.48</ecNumber>
    </recommendedName>
</protein>